<proteinExistence type="evidence at protein level"/>
<reference key="1">
    <citation type="submission" date="1992-09" db="EMBL/GenBank/DDBJ databases">
        <authorList>
            <person name="Schreiber M.G."/>
        </authorList>
    </citation>
    <scope>NUCLEOTIDE SEQUENCE [GENOMIC DNA]</scope>
    <source>
        <strain>B13</strain>
    </source>
</reference>
<reference key="2">
    <citation type="submission" date="1992-08" db="EMBL/GenBank/DDBJ databases">
        <title>Molecular cloning, expression and sequencing of extracellular Bb63, a immuno-reactive protein released by Bartonella bacilliformis.</title>
        <authorList>
            <person name="Xu Y."/>
            <person name="Lu Z."/>
            <person name="Ihler G."/>
        </authorList>
    </citation>
    <scope>NUCLEOTIDE SEQUENCE [GENOMIC DNA]</scope>
</reference>
<reference key="3">
    <citation type="journal article" date="1990" name="Am. J. Trop. Med. Hyg.">
        <title>Bb65, a major immunoreactive protein of Bartonella bacilliformis.</title>
        <authorList>
            <person name="Knobloch J."/>
            <person name="Schreiber M.G."/>
        </authorList>
    </citation>
    <scope>PROTEIN SEQUENCE OF 2-37</scope>
</reference>
<protein>
    <recommendedName>
        <fullName evidence="1">Chaperonin GroEL</fullName>
        <ecNumber evidence="1">5.6.1.7</ecNumber>
    </recommendedName>
    <alternativeName>
        <fullName evidence="1">60 kDa chaperonin</fullName>
    </alternativeName>
    <alternativeName>
        <fullName evidence="1">Chaperonin-60</fullName>
        <shortName evidence="1">Cpn60</shortName>
    </alternativeName>
</protein>
<evidence type="ECO:0000255" key="1">
    <source>
        <dbReference type="HAMAP-Rule" id="MF_00600"/>
    </source>
</evidence>
<evidence type="ECO:0000269" key="2">
    <source>
    </source>
</evidence>
<evidence type="ECO:0000305" key="3"/>
<gene>
    <name evidence="1" type="primary">groEL</name>
    <name type="synonym">7B2</name>
    <name type="synonym">Bb63</name>
    <name type="synonym">Bb65</name>
    <name evidence="1" type="synonym">groL</name>
    <name type="synonym">mopA</name>
</gene>
<comment type="function">
    <text evidence="1">Together with its co-chaperonin GroES, plays an essential role in assisting protein folding. The GroEL-GroES system forms a nano-cage that allows encapsulation of the non-native substrate proteins and provides a physical environment optimized to promote and accelerate protein folding.</text>
</comment>
<comment type="catalytic activity">
    <reaction evidence="1">
        <text>ATP + H2O + a folded polypeptide = ADP + phosphate + an unfolded polypeptide.</text>
        <dbReference type="EC" id="5.6.1.7"/>
    </reaction>
</comment>
<comment type="subunit">
    <text evidence="1">Forms a cylinder of 14 subunits composed of two heptameric rings stacked back-to-back. Interacts with the co-chaperonin GroES.</text>
</comment>
<comment type="subcellular location">
    <subcellularLocation>
        <location evidence="1">Cytoplasm</location>
    </subcellularLocation>
</comment>
<comment type="miscellaneous">
    <text>This protein is a major antigen in patients with bartonellosis, an infectious disease endemic in high altitude valleys of the Andes.</text>
</comment>
<comment type="similarity">
    <text evidence="1">Belongs to the chaperonin (HSP60) family.</text>
</comment>
<sequence length="544" mass="57617">MAAKEVKFGRDARERLLRGVDILADAVKVTLGPKGRNVVIDKSFGAPRITKDGVSVAKEIELENKFENMGAQMLREVASKTNDIAGDGTTTATVLGQAIVQEGVKAVAASMNPMDLKRGIDAAVEAVVADLFKKAKKIQTSEEIAQVATISANGAEDIGKMIADAMEKVGNEGVITVEEAKTAETELEVVEGMQFDRGYLSPYFVTNSEKMMVDLDDPYILIHEKKLSNLQSLLPVLEAVAQSGKPLLIIAEDVEGEALATLVVNKLRGGLKIAAVKAPGFGDRRKAMLEDIAVLTSGQVISEDVGIKLENVTLEMLGRAKKVHVSKETTTIVDGAGQKSEINARVSQIKAQIEETTSDYDREKLQERLAKLAGGVAVIRVGGSTEVEVKEKKDRVDDALNATRAAVEEGIVPGGGTPLLRAAKALSIKGKNPDQEAGIGIIRRALQAPARQIAHNAGEEAAVIVGKVLENCSDTFGYNTATAQFRDLISFGIVDPVKVVRSALQNAASIASLLITTEAMVAEVPKKEAAAPAMPGGGMGGMDF</sequence>
<name>CH60_BARBA</name>
<organism>
    <name type="scientific">Bartonella bacilliformis</name>
    <dbReference type="NCBI Taxonomy" id="774"/>
    <lineage>
        <taxon>Bacteria</taxon>
        <taxon>Pseudomonadati</taxon>
        <taxon>Pseudomonadota</taxon>
        <taxon>Alphaproteobacteria</taxon>
        <taxon>Hyphomicrobiales</taxon>
        <taxon>Bartonellaceae</taxon>
        <taxon>Bartonella</taxon>
    </lineage>
</organism>
<dbReference type="EC" id="5.6.1.7" evidence="1"/>
<dbReference type="EMBL" id="Z15160">
    <property type="protein sequence ID" value="CAA78859.1"/>
    <property type="molecule type" value="Genomic_DNA"/>
</dbReference>
<dbReference type="EMBL" id="M98257">
    <property type="protein sequence ID" value="AAA22898.1"/>
    <property type="molecule type" value="Genomic_DNA"/>
</dbReference>
<dbReference type="PIR" id="A60146">
    <property type="entry name" value="A60146"/>
</dbReference>
<dbReference type="PIR" id="S37039">
    <property type="entry name" value="S37039"/>
</dbReference>
<dbReference type="RefSeq" id="WP_005767840.1">
    <property type="nucleotide sequence ID" value="NZ_LQXX01000007.1"/>
</dbReference>
<dbReference type="SMR" id="P35635"/>
<dbReference type="GeneID" id="4683978"/>
<dbReference type="GO" id="GO:0005737">
    <property type="term" value="C:cytoplasm"/>
    <property type="evidence" value="ECO:0007669"/>
    <property type="project" value="UniProtKB-SubCell"/>
</dbReference>
<dbReference type="GO" id="GO:0005524">
    <property type="term" value="F:ATP binding"/>
    <property type="evidence" value="ECO:0007669"/>
    <property type="project" value="UniProtKB-UniRule"/>
</dbReference>
<dbReference type="GO" id="GO:0140662">
    <property type="term" value="F:ATP-dependent protein folding chaperone"/>
    <property type="evidence" value="ECO:0007669"/>
    <property type="project" value="InterPro"/>
</dbReference>
<dbReference type="GO" id="GO:0016853">
    <property type="term" value="F:isomerase activity"/>
    <property type="evidence" value="ECO:0007669"/>
    <property type="project" value="UniProtKB-KW"/>
</dbReference>
<dbReference type="GO" id="GO:0051082">
    <property type="term" value="F:unfolded protein binding"/>
    <property type="evidence" value="ECO:0007669"/>
    <property type="project" value="UniProtKB-UniRule"/>
</dbReference>
<dbReference type="GO" id="GO:0042026">
    <property type="term" value="P:protein refolding"/>
    <property type="evidence" value="ECO:0007669"/>
    <property type="project" value="UniProtKB-UniRule"/>
</dbReference>
<dbReference type="CDD" id="cd03344">
    <property type="entry name" value="GroEL"/>
    <property type="match status" value="1"/>
</dbReference>
<dbReference type="FunFam" id="1.10.560.10:FF:000001">
    <property type="entry name" value="60 kDa chaperonin"/>
    <property type="match status" value="1"/>
</dbReference>
<dbReference type="FunFam" id="3.50.7.10:FF:000001">
    <property type="entry name" value="60 kDa chaperonin"/>
    <property type="match status" value="1"/>
</dbReference>
<dbReference type="Gene3D" id="3.50.7.10">
    <property type="entry name" value="GroEL"/>
    <property type="match status" value="1"/>
</dbReference>
<dbReference type="Gene3D" id="1.10.560.10">
    <property type="entry name" value="GroEL-like equatorial domain"/>
    <property type="match status" value="1"/>
</dbReference>
<dbReference type="Gene3D" id="3.30.260.10">
    <property type="entry name" value="TCP-1-like chaperonin intermediate domain"/>
    <property type="match status" value="1"/>
</dbReference>
<dbReference type="HAMAP" id="MF_00600">
    <property type="entry name" value="CH60"/>
    <property type="match status" value="1"/>
</dbReference>
<dbReference type="InterPro" id="IPR018370">
    <property type="entry name" value="Chaperonin_Cpn60_CS"/>
</dbReference>
<dbReference type="InterPro" id="IPR001844">
    <property type="entry name" value="Cpn60/GroEL"/>
</dbReference>
<dbReference type="InterPro" id="IPR002423">
    <property type="entry name" value="Cpn60/GroEL/TCP-1"/>
</dbReference>
<dbReference type="InterPro" id="IPR027409">
    <property type="entry name" value="GroEL-like_apical_dom_sf"/>
</dbReference>
<dbReference type="InterPro" id="IPR027413">
    <property type="entry name" value="GROEL-like_equatorial_sf"/>
</dbReference>
<dbReference type="InterPro" id="IPR027410">
    <property type="entry name" value="TCP-1-like_intermed_sf"/>
</dbReference>
<dbReference type="NCBIfam" id="TIGR02348">
    <property type="entry name" value="GroEL"/>
    <property type="match status" value="1"/>
</dbReference>
<dbReference type="NCBIfam" id="NF000592">
    <property type="entry name" value="PRK00013.1"/>
    <property type="match status" value="1"/>
</dbReference>
<dbReference type="NCBIfam" id="NF009487">
    <property type="entry name" value="PRK12849.1"/>
    <property type="match status" value="1"/>
</dbReference>
<dbReference type="NCBIfam" id="NF009488">
    <property type="entry name" value="PRK12850.1"/>
    <property type="match status" value="1"/>
</dbReference>
<dbReference type="NCBIfam" id="NF009489">
    <property type="entry name" value="PRK12851.1"/>
    <property type="match status" value="1"/>
</dbReference>
<dbReference type="PANTHER" id="PTHR45633">
    <property type="entry name" value="60 KDA HEAT SHOCK PROTEIN, MITOCHONDRIAL"/>
    <property type="match status" value="1"/>
</dbReference>
<dbReference type="Pfam" id="PF00118">
    <property type="entry name" value="Cpn60_TCP1"/>
    <property type="match status" value="1"/>
</dbReference>
<dbReference type="PRINTS" id="PR00298">
    <property type="entry name" value="CHAPERONIN60"/>
</dbReference>
<dbReference type="SUPFAM" id="SSF52029">
    <property type="entry name" value="GroEL apical domain-like"/>
    <property type="match status" value="1"/>
</dbReference>
<dbReference type="SUPFAM" id="SSF48592">
    <property type="entry name" value="GroEL equatorial domain-like"/>
    <property type="match status" value="1"/>
</dbReference>
<dbReference type="SUPFAM" id="SSF54849">
    <property type="entry name" value="GroEL-intermediate domain like"/>
    <property type="match status" value="1"/>
</dbReference>
<dbReference type="PROSITE" id="PS00296">
    <property type="entry name" value="CHAPERONINS_CPN60"/>
    <property type="match status" value="1"/>
</dbReference>
<keyword id="KW-0067">ATP-binding</keyword>
<keyword id="KW-0143">Chaperone</keyword>
<keyword id="KW-0963">Cytoplasm</keyword>
<keyword id="KW-0903">Direct protein sequencing</keyword>
<keyword id="KW-0413">Isomerase</keyword>
<keyword id="KW-0547">Nucleotide-binding</keyword>
<accession>P35635</accession>
<feature type="initiator methionine" description="Removed" evidence="2">
    <location>
        <position position="1"/>
    </location>
</feature>
<feature type="chain" id="PRO_0000063282" description="Chaperonin GroEL">
    <location>
        <begin position="2"/>
        <end position="544"/>
    </location>
</feature>
<feature type="binding site" evidence="1">
    <location>
        <begin position="30"/>
        <end position="33"/>
    </location>
    <ligand>
        <name>ATP</name>
        <dbReference type="ChEBI" id="CHEBI:30616"/>
    </ligand>
</feature>
<feature type="binding site" evidence="1">
    <location>
        <position position="51"/>
    </location>
    <ligand>
        <name>ATP</name>
        <dbReference type="ChEBI" id="CHEBI:30616"/>
    </ligand>
</feature>
<feature type="binding site" evidence="1">
    <location>
        <begin position="87"/>
        <end position="91"/>
    </location>
    <ligand>
        <name>ATP</name>
        <dbReference type="ChEBI" id="CHEBI:30616"/>
    </ligand>
</feature>
<feature type="binding site" evidence="1">
    <location>
        <position position="415"/>
    </location>
    <ligand>
        <name>ATP</name>
        <dbReference type="ChEBI" id="CHEBI:30616"/>
    </ligand>
</feature>
<feature type="binding site" evidence="1">
    <location>
        <position position="495"/>
    </location>
    <ligand>
        <name>ATP</name>
        <dbReference type="ChEBI" id="CHEBI:30616"/>
    </ligand>
</feature>
<feature type="sequence conflict" description="In Ref. 3; AA sequence." evidence="3" ref="3">
    <original>R</original>
    <variation>N</variation>
    <location>
        <position position="10"/>
    </location>
</feature>
<feature type="sequence conflict" description="In Ref. 3; AA sequence." evidence="3" ref="3">
    <original>L</original>
    <variation>M</variation>
    <location>
        <position position="16"/>
    </location>
</feature>
<feature type="sequence conflict" description="In Ref. 3; AA sequence." evidence="3" ref="3">
    <original>KGR</original>
    <variation>VGV</variation>
    <location>
        <begin position="34"/>
        <end position="36"/>
    </location>
</feature>
<feature type="sequence conflict" description="In Ref. 2; AAA22898." evidence="3" ref="2">
    <original>A</original>
    <variation>V</variation>
    <location>
        <position position="241"/>
    </location>
</feature>
<feature type="sequence conflict" description="In Ref. 2; AAA22898." evidence="3" ref="2">
    <original>P</original>
    <variation>A</variation>
    <location>
        <position position="418"/>
    </location>
</feature>
<feature type="sequence conflict" description="In Ref. 2; AAA22898." evidence="3" ref="2">
    <original>R</original>
    <variation>G</variation>
    <location>
        <position position="486"/>
    </location>
</feature>